<accession>Q57HM5</accession>
<feature type="chain" id="PRO_0000303853" description="Xaa-Pro dipeptidase">
    <location>
        <begin position="1"/>
        <end position="443"/>
    </location>
</feature>
<feature type="binding site" evidence="1">
    <location>
        <position position="246"/>
    </location>
    <ligand>
        <name>Mn(2+)</name>
        <dbReference type="ChEBI" id="CHEBI:29035"/>
        <label>2</label>
    </ligand>
</feature>
<feature type="binding site" evidence="1">
    <location>
        <position position="257"/>
    </location>
    <ligand>
        <name>Mn(2+)</name>
        <dbReference type="ChEBI" id="CHEBI:29035"/>
        <label>1</label>
    </ligand>
</feature>
<feature type="binding site" evidence="1">
    <location>
        <position position="257"/>
    </location>
    <ligand>
        <name>Mn(2+)</name>
        <dbReference type="ChEBI" id="CHEBI:29035"/>
        <label>2</label>
    </ligand>
</feature>
<feature type="binding site" evidence="1">
    <location>
        <position position="339"/>
    </location>
    <ligand>
        <name>Mn(2+)</name>
        <dbReference type="ChEBI" id="CHEBI:29035"/>
        <label>1</label>
    </ligand>
</feature>
<feature type="binding site" evidence="1">
    <location>
        <position position="384"/>
    </location>
    <ligand>
        <name>Mn(2+)</name>
        <dbReference type="ChEBI" id="CHEBI:29035"/>
        <label>1</label>
    </ligand>
</feature>
<feature type="binding site" evidence="1">
    <location>
        <position position="423"/>
    </location>
    <ligand>
        <name>Mn(2+)</name>
        <dbReference type="ChEBI" id="CHEBI:29035"/>
        <label>1</label>
    </ligand>
</feature>
<feature type="binding site" evidence="1">
    <location>
        <position position="423"/>
    </location>
    <ligand>
        <name>Mn(2+)</name>
        <dbReference type="ChEBI" id="CHEBI:29035"/>
        <label>2</label>
    </ligand>
</feature>
<sequence length="443" mass="50170">MESLAALYKNHIVTLQERTRDVLARFKLDALLIHSGELFNVFLDDHPYPFKVNPQFKAWVPVTQVPNCWLLVDGVNKPKLWFYLPVDYWHNVEPLPTSFWTEEVEVVALPKADGIGSQLPAARGNIGYIGPVPERALQLDIAASNINPKGVIDYLHYYRAYKTDYELACMREAQKMAVSGHRAAEEAFRSGMSEFDINLAYLTATGHRDTDVPYSNIVALNEHAAVLHYTKLDHQAPSEMRSFLLDAGAEYNGYAADLTRTWSAKSDNDYAHLVKDVNDEQLALIATMKAGVSYVDYHIQFHQRIAKLLRKHQIITDMSEEAMVENDLTGPFMPHGIGHPLGLQVHDVAGFMQDDSGTHLAAPSKYPYLRCTRVLQPRMVLTIEPGIYFIESLLAPWREGPFSKHFNWQKIEALKPFGGIRIEDNVVIHENGVENMTRDLKLA</sequence>
<gene>
    <name evidence="1" type="primary">pepQ</name>
    <name type="ordered locus">SCH_3881</name>
</gene>
<comment type="function">
    <text evidence="1">Splits dipeptides with a prolyl residue in the C-terminal position.</text>
</comment>
<comment type="catalytic activity">
    <reaction evidence="1">
        <text>Xaa-L-Pro dipeptide + H2O = an L-alpha-amino acid + L-proline</text>
        <dbReference type="Rhea" id="RHEA:76407"/>
        <dbReference type="ChEBI" id="CHEBI:15377"/>
        <dbReference type="ChEBI" id="CHEBI:59869"/>
        <dbReference type="ChEBI" id="CHEBI:60039"/>
        <dbReference type="ChEBI" id="CHEBI:195196"/>
        <dbReference type="EC" id="3.4.13.9"/>
    </reaction>
</comment>
<comment type="cofactor">
    <cofactor evidence="1">
        <name>Mn(2+)</name>
        <dbReference type="ChEBI" id="CHEBI:29035"/>
    </cofactor>
    <text evidence="1">Binds 2 manganese ions per subunit.</text>
</comment>
<comment type="similarity">
    <text evidence="1">Belongs to the peptidase M24B family. Bacterial-type prolidase subfamily.</text>
</comment>
<keyword id="KW-0224">Dipeptidase</keyword>
<keyword id="KW-0378">Hydrolase</keyword>
<keyword id="KW-0464">Manganese</keyword>
<keyword id="KW-0479">Metal-binding</keyword>
<keyword id="KW-0482">Metalloprotease</keyword>
<keyword id="KW-0645">Protease</keyword>
<organism>
    <name type="scientific">Salmonella choleraesuis (strain SC-B67)</name>
    <dbReference type="NCBI Taxonomy" id="321314"/>
    <lineage>
        <taxon>Bacteria</taxon>
        <taxon>Pseudomonadati</taxon>
        <taxon>Pseudomonadota</taxon>
        <taxon>Gammaproteobacteria</taxon>
        <taxon>Enterobacterales</taxon>
        <taxon>Enterobacteriaceae</taxon>
        <taxon>Salmonella</taxon>
    </lineage>
</organism>
<reference key="1">
    <citation type="journal article" date="2005" name="Nucleic Acids Res.">
        <title>The genome sequence of Salmonella enterica serovar Choleraesuis, a highly invasive and resistant zoonotic pathogen.</title>
        <authorList>
            <person name="Chiu C.-H."/>
            <person name="Tang P."/>
            <person name="Chu C."/>
            <person name="Hu S."/>
            <person name="Bao Q."/>
            <person name="Yu J."/>
            <person name="Chou Y.-Y."/>
            <person name="Wang H.-S."/>
            <person name="Lee Y.-S."/>
        </authorList>
    </citation>
    <scope>NUCLEOTIDE SEQUENCE [LARGE SCALE GENOMIC DNA]</scope>
    <source>
        <strain>SC-B67</strain>
    </source>
</reference>
<proteinExistence type="inferred from homology"/>
<protein>
    <recommendedName>
        <fullName evidence="1">Xaa-Pro dipeptidase</fullName>
        <shortName evidence="1">X-Pro dipeptidase</shortName>
        <ecNumber evidence="1">3.4.13.9</ecNumber>
    </recommendedName>
    <alternativeName>
        <fullName evidence="1">Imidodipeptidase</fullName>
    </alternativeName>
    <alternativeName>
        <fullName evidence="1">Proline dipeptidase</fullName>
        <shortName evidence="1">Prolidase</shortName>
    </alternativeName>
</protein>
<dbReference type="EC" id="3.4.13.9" evidence="1"/>
<dbReference type="EMBL" id="AE017220">
    <property type="protein sequence ID" value="AAX67787.1"/>
    <property type="molecule type" value="Genomic_DNA"/>
</dbReference>
<dbReference type="RefSeq" id="WP_000444529.1">
    <property type="nucleotide sequence ID" value="NC_006905.1"/>
</dbReference>
<dbReference type="SMR" id="Q57HM5"/>
<dbReference type="MEROPS" id="M24.003"/>
<dbReference type="KEGG" id="sec:SCH_3881"/>
<dbReference type="HOGENOM" id="CLU_050675_0_0_6"/>
<dbReference type="Proteomes" id="UP000000538">
    <property type="component" value="Chromosome"/>
</dbReference>
<dbReference type="GO" id="GO:0005829">
    <property type="term" value="C:cytosol"/>
    <property type="evidence" value="ECO:0007669"/>
    <property type="project" value="TreeGrafter"/>
</dbReference>
<dbReference type="GO" id="GO:0004177">
    <property type="term" value="F:aminopeptidase activity"/>
    <property type="evidence" value="ECO:0007669"/>
    <property type="project" value="TreeGrafter"/>
</dbReference>
<dbReference type="GO" id="GO:0046872">
    <property type="term" value="F:metal ion binding"/>
    <property type="evidence" value="ECO:0007669"/>
    <property type="project" value="UniProtKB-KW"/>
</dbReference>
<dbReference type="GO" id="GO:0008235">
    <property type="term" value="F:metalloexopeptidase activity"/>
    <property type="evidence" value="ECO:0007669"/>
    <property type="project" value="UniProtKB-UniRule"/>
</dbReference>
<dbReference type="GO" id="GO:0016795">
    <property type="term" value="F:phosphoric triester hydrolase activity"/>
    <property type="evidence" value="ECO:0007669"/>
    <property type="project" value="InterPro"/>
</dbReference>
<dbReference type="GO" id="GO:0102009">
    <property type="term" value="F:proline dipeptidase activity"/>
    <property type="evidence" value="ECO:0007669"/>
    <property type="project" value="UniProtKB-EC"/>
</dbReference>
<dbReference type="GO" id="GO:0006508">
    <property type="term" value="P:proteolysis"/>
    <property type="evidence" value="ECO:0007669"/>
    <property type="project" value="UniProtKB-KW"/>
</dbReference>
<dbReference type="CDD" id="cd01087">
    <property type="entry name" value="Prolidase"/>
    <property type="match status" value="1"/>
</dbReference>
<dbReference type="FunFam" id="3.40.350.10:FF:000002">
    <property type="entry name" value="Xaa-Pro dipeptidase"/>
    <property type="match status" value="1"/>
</dbReference>
<dbReference type="FunFam" id="3.90.230.10:FF:000006">
    <property type="entry name" value="Xaa-Pro dipeptidase"/>
    <property type="match status" value="1"/>
</dbReference>
<dbReference type="Gene3D" id="3.90.230.10">
    <property type="entry name" value="Creatinase/methionine aminopeptidase superfamily"/>
    <property type="match status" value="1"/>
</dbReference>
<dbReference type="Gene3D" id="3.40.350.10">
    <property type="entry name" value="Creatinase/prolidase N-terminal domain"/>
    <property type="match status" value="1"/>
</dbReference>
<dbReference type="HAMAP" id="MF_01279">
    <property type="entry name" value="X_Pro_dipeptid"/>
    <property type="match status" value="1"/>
</dbReference>
<dbReference type="InterPro" id="IPR029149">
    <property type="entry name" value="Creatin/AminoP/Spt16_N"/>
</dbReference>
<dbReference type="InterPro" id="IPR036005">
    <property type="entry name" value="Creatinase/aminopeptidase-like"/>
</dbReference>
<dbReference type="InterPro" id="IPR048819">
    <property type="entry name" value="PepQ_N"/>
</dbReference>
<dbReference type="InterPro" id="IPR000994">
    <property type="entry name" value="Pept_M24"/>
</dbReference>
<dbReference type="InterPro" id="IPR001131">
    <property type="entry name" value="Peptidase_M24B_aminopep-P_CS"/>
</dbReference>
<dbReference type="InterPro" id="IPR052433">
    <property type="entry name" value="X-Pro_dipept-like"/>
</dbReference>
<dbReference type="InterPro" id="IPR022846">
    <property type="entry name" value="X_Pro_dipept"/>
</dbReference>
<dbReference type="NCBIfam" id="NF010133">
    <property type="entry name" value="PRK13607.1"/>
    <property type="match status" value="1"/>
</dbReference>
<dbReference type="PANTHER" id="PTHR43226">
    <property type="entry name" value="XAA-PRO AMINOPEPTIDASE 3"/>
    <property type="match status" value="1"/>
</dbReference>
<dbReference type="PANTHER" id="PTHR43226:SF8">
    <property type="entry name" value="XAA-PRO DIPEPTIDASE"/>
    <property type="match status" value="1"/>
</dbReference>
<dbReference type="Pfam" id="PF21216">
    <property type="entry name" value="PepQ_N"/>
    <property type="match status" value="1"/>
</dbReference>
<dbReference type="Pfam" id="PF00557">
    <property type="entry name" value="Peptidase_M24"/>
    <property type="match status" value="1"/>
</dbReference>
<dbReference type="SUPFAM" id="SSF55920">
    <property type="entry name" value="Creatinase/aminopeptidase"/>
    <property type="match status" value="1"/>
</dbReference>
<dbReference type="PROSITE" id="PS00491">
    <property type="entry name" value="PROLINE_PEPTIDASE"/>
    <property type="match status" value="1"/>
</dbReference>
<evidence type="ECO:0000255" key="1">
    <source>
        <dbReference type="HAMAP-Rule" id="MF_01279"/>
    </source>
</evidence>
<name>PEPQ_SALCH</name>